<evidence type="ECO:0000250" key="1"/>
<evidence type="ECO:0000255" key="2">
    <source>
        <dbReference type="PROSITE-ProRule" id="PRU00159"/>
    </source>
</evidence>
<evidence type="ECO:0000255" key="3">
    <source>
        <dbReference type="PROSITE-ProRule" id="PRU10027"/>
    </source>
</evidence>
<evidence type="ECO:0000269" key="4">
    <source>
    </source>
</evidence>
<evidence type="ECO:0000305" key="5"/>
<proteinExistence type="evidence at protein level"/>
<gene>
    <name type="primary">Pim3</name>
    <name type="synonym">Kid1</name>
</gene>
<name>PIM3_RAT</name>
<reference key="1">
    <citation type="submission" date="1998-08" db="EMBL/GenBank/DDBJ databases">
        <title>Pim-3 is a member of the pim kinase family.</title>
        <authorList>
            <person name="Konietzko U."/>
            <person name="Kuhl D."/>
        </authorList>
    </citation>
    <scope>NUCLEOTIDE SEQUENCE [MRNA]</scope>
    <source>
        <strain>Sprague-Dawley</strain>
    </source>
</reference>
<reference key="2">
    <citation type="journal article" date="1998" name="J. Biol. Chem.">
        <title>KID-1, a protein kinase induced by depolarization in brain.</title>
        <authorList>
            <person name="Feldman J.D."/>
            <person name="Vician L."/>
            <person name="Crispino M."/>
            <person name="Tocco G."/>
            <person name="Marcheselli V.L."/>
            <person name="Bazan N.G."/>
            <person name="Baudry M."/>
            <person name="Herschman H.R."/>
        </authorList>
    </citation>
    <scope>NUCLEOTIDE SEQUENCE [MRNA]</scope>
    <scope>INDUCTION</scope>
    <scope>TISSUE SPECIFICITY</scope>
    <scope>AUTOPHOSPHORYLATION</scope>
</reference>
<keyword id="KW-0053">Apoptosis</keyword>
<keyword id="KW-0067">ATP-binding</keyword>
<keyword id="KW-0131">Cell cycle</keyword>
<keyword id="KW-0963">Cytoplasm</keyword>
<keyword id="KW-0418">Kinase</keyword>
<keyword id="KW-0547">Nucleotide-binding</keyword>
<keyword id="KW-0597">Phosphoprotein</keyword>
<keyword id="KW-0656">Proto-oncogene</keyword>
<keyword id="KW-1185">Reference proteome</keyword>
<keyword id="KW-0723">Serine/threonine-protein kinase</keyword>
<keyword id="KW-0808">Transferase</keyword>
<keyword id="KW-0832">Ubl conjugation</keyword>
<organism>
    <name type="scientific">Rattus norvegicus</name>
    <name type="common">Rat</name>
    <dbReference type="NCBI Taxonomy" id="10116"/>
    <lineage>
        <taxon>Eukaryota</taxon>
        <taxon>Metazoa</taxon>
        <taxon>Chordata</taxon>
        <taxon>Craniata</taxon>
        <taxon>Vertebrata</taxon>
        <taxon>Euteleostomi</taxon>
        <taxon>Mammalia</taxon>
        <taxon>Eutheria</taxon>
        <taxon>Euarchontoglires</taxon>
        <taxon>Glires</taxon>
        <taxon>Rodentia</taxon>
        <taxon>Myomorpha</taxon>
        <taxon>Muroidea</taxon>
        <taxon>Muridae</taxon>
        <taxon>Murinae</taxon>
        <taxon>Rattus</taxon>
    </lineage>
</organism>
<comment type="function">
    <text evidence="1">Proto-oncogene with serine/threonine kinase activity that can prevent apoptosis and promote cell survival and protein translation. May contribute to tumorigenesis through: the delivery of survival signaling through phosphorylation of BAD which induces release of the anti-apoptotic protein Bcl-X(L), the regulation of cell cycle progression and protein synthesis and by regulation of MYC transcriptional activity. Additionally to this role on tumorigenesis, can also negatively regulate insulin secretion by inhibiting the activation of MAPK1/3 (ERK1/2), through SOCS6. Involved also in the control of energy metabolism and regulation of AMPK activity in modulating MYC and PPARGC1A protein levels and cell growth (By similarity).</text>
</comment>
<comment type="catalytic activity">
    <reaction>
        <text>L-seryl-[protein] + ATP = O-phospho-L-seryl-[protein] + ADP + H(+)</text>
        <dbReference type="Rhea" id="RHEA:17989"/>
        <dbReference type="Rhea" id="RHEA-COMP:9863"/>
        <dbReference type="Rhea" id="RHEA-COMP:11604"/>
        <dbReference type="ChEBI" id="CHEBI:15378"/>
        <dbReference type="ChEBI" id="CHEBI:29999"/>
        <dbReference type="ChEBI" id="CHEBI:30616"/>
        <dbReference type="ChEBI" id="CHEBI:83421"/>
        <dbReference type="ChEBI" id="CHEBI:456216"/>
        <dbReference type="EC" id="2.7.11.1"/>
    </reaction>
</comment>
<comment type="catalytic activity">
    <reaction>
        <text>L-threonyl-[protein] + ATP = O-phospho-L-threonyl-[protein] + ADP + H(+)</text>
        <dbReference type="Rhea" id="RHEA:46608"/>
        <dbReference type="Rhea" id="RHEA-COMP:11060"/>
        <dbReference type="Rhea" id="RHEA-COMP:11605"/>
        <dbReference type="ChEBI" id="CHEBI:15378"/>
        <dbReference type="ChEBI" id="CHEBI:30013"/>
        <dbReference type="ChEBI" id="CHEBI:30616"/>
        <dbReference type="ChEBI" id="CHEBI:61977"/>
        <dbReference type="ChEBI" id="CHEBI:456216"/>
        <dbReference type="EC" id="2.7.11.1"/>
    </reaction>
</comment>
<comment type="subunit">
    <text evidence="1">Interacts with BAD. Interacts with PPP2CA; this interaction promotes dephosphorylation of PIM3, ubiquitination and proteasomal degradation. Interacts with SOCS6.</text>
</comment>
<comment type="subcellular location">
    <subcellularLocation>
        <location evidence="1">Cytoplasm</location>
    </subcellularLocation>
</comment>
<comment type="tissue specificity">
    <text evidence="4">Detected in various tissues, including brain.</text>
</comment>
<comment type="induction">
    <text evidence="4">By membrane depolarization or forskolin.</text>
</comment>
<comment type="PTM">
    <text evidence="1">Ubiquitinated, leading to proteasomal degradation.</text>
</comment>
<comment type="PTM">
    <text evidence="1">Phosphorylated. Interaction with PPP2CA promotes dephosphorylation (By similarity). Autophosphorylated (in vitro).</text>
</comment>
<comment type="similarity">
    <text evidence="5">Belongs to the protein kinase superfamily. CAMK Ser/Thr protein kinase family. PIM subfamily.</text>
</comment>
<comment type="sequence caution" evidence="5">
    <conflict type="erroneous initiation">
        <sequence resource="EMBL-CDS" id="AAC68900"/>
    </conflict>
    <text>Extended N-terminus.</text>
</comment>
<sequence>MLLSKFGSLAHLCGPGGVDHLPVKILQPAKADKESFEKVYQVGAVLGSGGFGTVYAGSRIADGLPVAVKHVVKERVTEWGSLGGMAVPLEVVLLRKVGAAGGARGVIRLLDWFERPDGFLLVLERPEPAQDLFDFITERGALDEPLARRFFAQVLAAVRHCHNCGVVHRDIKDENLLVDLRSGELKLIDFGSGAVLKDTVYTDFDGTRVYSPPEWIRYHRYHGRSATVWSLGVLLYDMVCGDIPFEQDEEILRGRLFFRRRVSPECQQLIEWCLSLRPSERPSLDQIAAHPWMLGTEGSVPENCDLRLCALDTDDGASTTSSSESL</sequence>
<accession>O70444</accession>
<dbReference type="EC" id="2.7.11.1"/>
<dbReference type="EMBL" id="AF086624">
    <property type="protein sequence ID" value="AAC68900.1"/>
    <property type="status" value="ALT_INIT"/>
    <property type="molecule type" value="mRNA"/>
</dbReference>
<dbReference type="EMBL" id="AF057026">
    <property type="protein sequence ID" value="AAC36065.1"/>
    <property type="molecule type" value="mRNA"/>
</dbReference>
<dbReference type="RefSeq" id="NP_072124.1">
    <property type="nucleotide sequence ID" value="NM_022602.1"/>
</dbReference>
<dbReference type="RefSeq" id="XP_063120283.1">
    <property type="nucleotide sequence ID" value="XM_063264213.1"/>
</dbReference>
<dbReference type="SMR" id="O70444"/>
<dbReference type="FunCoup" id="O70444">
    <property type="interactions" value="196"/>
</dbReference>
<dbReference type="STRING" id="10116.ENSRNOP00000072553"/>
<dbReference type="BindingDB" id="O70444"/>
<dbReference type="ChEMBL" id="CHEMBL3638335"/>
<dbReference type="PhosphoSitePlus" id="O70444"/>
<dbReference type="PaxDb" id="10116-ENSRNOP00000045396"/>
<dbReference type="Ensembl" id="ENSRNOT00000043461.5">
    <property type="protein sequence ID" value="ENSRNOP00000045396.5"/>
    <property type="gene ID" value="ENSRNOG00000029698.6"/>
</dbReference>
<dbReference type="GeneID" id="64534"/>
<dbReference type="KEGG" id="rno:64534"/>
<dbReference type="AGR" id="RGD:620462"/>
<dbReference type="CTD" id="415116"/>
<dbReference type="RGD" id="620462">
    <property type="gene designation" value="Pim3"/>
</dbReference>
<dbReference type="eggNOG" id="KOG0583">
    <property type="taxonomic scope" value="Eukaryota"/>
</dbReference>
<dbReference type="GeneTree" id="ENSGT00940000153394"/>
<dbReference type="InParanoid" id="O70444"/>
<dbReference type="OrthoDB" id="68982at9989"/>
<dbReference type="PhylomeDB" id="O70444"/>
<dbReference type="PRO" id="PR:O70444"/>
<dbReference type="Proteomes" id="UP000002494">
    <property type="component" value="Chromosome 7"/>
</dbReference>
<dbReference type="GO" id="GO:0005737">
    <property type="term" value="C:cytoplasm"/>
    <property type="evidence" value="ECO:0000318"/>
    <property type="project" value="GO_Central"/>
</dbReference>
<dbReference type="GO" id="GO:0005829">
    <property type="term" value="C:cytosol"/>
    <property type="evidence" value="ECO:0007669"/>
    <property type="project" value="Ensembl"/>
</dbReference>
<dbReference type="GO" id="GO:0005524">
    <property type="term" value="F:ATP binding"/>
    <property type="evidence" value="ECO:0007669"/>
    <property type="project" value="UniProtKB-KW"/>
</dbReference>
<dbReference type="GO" id="GO:0106310">
    <property type="term" value="F:protein serine kinase activity"/>
    <property type="evidence" value="ECO:0007669"/>
    <property type="project" value="RHEA"/>
</dbReference>
<dbReference type="GO" id="GO:0004674">
    <property type="term" value="F:protein serine/threonine kinase activity"/>
    <property type="evidence" value="ECO:0000314"/>
    <property type="project" value="RGD"/>
</dbReference>
<dbReference type="GO" id="GO:0006915">
    <property type="term" value="P:apoptotic process"/>
    <property type="evidence" value="ECO:0007669"/>
    <property type="project" value="UniProtKB-KW"/>
</dbReference>
<dbReference type="GO" id="GO:1904322">
    <property type="term" value="P:cellular response to forskolin"/>
    <property type="evidence" value="ECO:0000270"/>
    <property type="project" value="RGD"/>
</dbReference>
<dbReference type="GO" id="GO:0043066">
    <property type="term" value="P:negative regulation of apoptotic process"/>
    <property type="evidence" value="ECO:0000250"/>
    <property type="project" value="UniProtKB"/>
</dbReference>
<dbReference type="GO" id="GO:0061179">
    <property type="term" value="P:negative regulation of insulin secretion involved in cellular response to glucose stimulus"/>
    <property type="evidence" value="ECO:0000250"/>
    <property type="project" value="UniProtKB"/>
</dbReference>
<dbReference type="GO" id="GO:0006468">
    <property type="term" value="P:protein phosphorylation"/>
    <property type="evidence" value="ECO:0000250"/>
    <property type="project" value="UniProtKB"/>
</dbReference>
<dbReference type="GO" id="GO:0007346">
    <property type="term" value="P:regulation of mitotic cell cycle"/>
    <property type="evidence" value="ECO:0000250"/>
    <property type="project" value="UniProtKB"/>
</dbReference>
<dbReference type="FunFam" id="1.10.510.10:FF:000209">
    <property type="entry name" value="Serine/threonine-protein kinase pim-1"/>
    <property type="match status" value="1"/>
</dbReference>
<dbReference type="FunFam" id="3.30.200.20:FF:000232">
    <property type="entry name" value="Serine/threonine-protein kinase pim-1"/>
    <property type="match status" value="1"/>
</dbReference>
<dbReference type="Gene3D" id="3.30.200.20">
    <property type="entry name" value="Phosphorylase Kinase, domain 1"/>
    <property type="match status" value="1"/>
</dbReference>
<dbReference type="Gene3D" id="1.10.510.10">
    <property type="entry name" value="Transferase(Phosphotransferase) domain 1"/>
    <property type="match status" value="1"/>
</dbReference>
<dbReference type="InterPro" id="IPR011009">
    <property type="entry name" value="Kinase-like_dom_sf"/>
</dbReference>
<dbReference type="InterPro" id="IPR017348">
    <property type="entry name" value="PIM1/2/3"/>
</dbReference>
<dbReference type="InterPro" id="IPR051138">
    <property type="entry name" value="PIM_Ser/Thr_kinase"/>
</dbReference>
<dbReference type="InterPro" id="IPR000719">
    <property type="entry name" value="Prot_kinase_dom"/>
</dbReference>
<dbReference type="InterPro" id="IPR017441">
    <property type="entry name" value="Protein_kinase_ATP_BS"/>
</dbReference>
<dbReference type="InterPro" id="IPR008271">
    <property type="entry name" value="Ser/Thr_kinase_AS"/>
</dbReference>
<dbReference type="PANTHER" id="PTHR22984">
    <property type="entry name" value="SERINE/THREONINE-PROTEIN KINASE PIM"/>
    <property type="match status" value="1"/>
</dbReference>
<dbReference type="PANTHER" id="PTHR22984:SF26">
    <property type="entry name" value="SERINE_THREONINE-PROTEIN KINASE PIM-3"/>
    <property type="match status" value="1"/>
</dbReference>
<dbReference type="Pfam" id="PF00069">
    <property type="entry name" value="Pkinase"/>
    <property type="match status" value="1"/>
</dbReference>
<dbReference type="PIRSF" id="PIRSF037993">
    <property type="entry name" value="STPK_Pim-1"/>
    <property type="match status" value="1"/>
</dbReference>
<dbReference type="SMART" id="SM00220">
    <property type="entry name" value="S_TKc"/>
    <property type="match status" value="1"/>
</dbReference>
<dbReference type="SUPFAM" id="SSF56112">
    <property type="entry name" value="Protein kinase-like (PK-like)"/>
    <property type="match status" value="1"/>
</dbReference>
<dbReference type="PROSITE" id="PS00107">
    <property type="entry name" value="PROTEIN_KINASE_ATP"/>
    <property type="match status" value="1"/>
</dbReference>
<dbReference type="PROSITE" id="PS50011">
    <property type="entry name" value="PROTEIN_KINASE_DOM"/>
    <property type="match status" value="1"/>
</dbReference>
<dbReference type="PROSITE" id="PS00108">
    <property type="entry name" value="PROTEIN_KINASE_ST"/>
    <property type="match status" value="1"/>
</dbReference>
<feature type="chain" id="PRO_0000086535" description="Serine/threonine-protein kinase pim-3">
    <location>
        <begin position="1"/>
        <end position="326"/>
    </location>
</feature>
<feature type="domain" description="Protein kinase" evidence="2">
    <location>
        <begin position="40"/>
        <end position="293"/>
    </location>
</feature>
<feature type="active site" description="Proton acceptor" evidence="2 3">
    <location>
        <position position="170"/>
    </location>
</feature>
<feature type="binding site" evidence="2">
    <location>
        <begin position="46"/>
        <end position="54"/>
    </location>
    <ligand>
        <name>ATP</name>
        <dbReference type="ChEBI" id="CHEBI:30616"/>
    </ligand>
</feature>
<feature type="binding site" evidence="2">
    <location>
        <position position="69"/>
    </location>
    <ligand>
        <name>ATP</name>
        <dbReference type="ChEBI" id="CHEBI:30616"/>
    </ligand>
</feature>
<protein>
    <recommendedName>
        <fullName>Serine/threonine-protein kinase pim-3</fullName>
        <ecNumber>2.7.11.1</ecNumber>
    </recommendedName>
    <alternativeName>
        <fullName>Kinase induced by depolarization</fullName>
    </alternativeName>
    <alternativeName>
        <fullName>Protein kinase Kid-1</fullName>
    </alternativeName>
</protein>